<proteinExistence type="inferred from homology"/>
<reference key="1">
    <citation type="journal article" date="2005" name="Plant Syst. Evol.">
        <title>Relationships within Myrtaceae sensu lato based on a matK phylogeny.</title>
        <authorList>
            <person name="Wilson P.G."/>
            <person name="O'Brien M.M."/>
            <person name="Heslewood M.M."/>
            <person name="Quinn C.J."/>
        </authorList>
    </citation>
    <scope>NUCLEOTIDE SEQUENCE [GENOMIC DNA]</scope>
</reference>
<dbReference type="EMBL" id="AF368200">
    <property type="protein sequence ID" value="AAL37568.1"/>
    <property type="molecule type" value="Genomic_DNA"/>
</dbReference>
<dbReference type="GO" id="GO:0009507">
    <property type="term" value="C:chloroplast"/>
    <property type="evidence" value="ECO:0007669"/>
    <property type="project" value="UniProtKB-SubCell"/>
</dbReference>
<dbReference type="GO" id="GO:0003723">
    <property type="term" value="F:RNA binding"/>
    <property type="evidence" value="ECO:0007669"/>
    <property type="project" value="UniProtKB-KW"/>
</dbReference>
<dbReference type="GO" id="GO:0006397">
    <property type="term" value="P:mRNA processing"/>
    <property type="evidence" value="ECO:0007669"/>
    <property type="project" value="UniProtKB-KW"/>
</dbReference>
<dbReference type="GO" id="GO:0008380">
    <property type="term" value="P:RNA splicing"/>
    <property type="evidence" value="ECO:0007669"/>
    <property type="project" value="UniProtKB-UniRule"/>
</dbReference>
<dbReference type="GO" id="GO:0008033">
    <property type="term" value="P:tRNA processing"/>
    <property type="evidence" value="ECO:0007669"/>
    <property type="project" value="UniProtKB-KW"/>
</dbReference>
<dbReference type="HAMAP" id="MF_01390">
    <property type="entry name" value="MatK"/>
    <property type="match status" value="1"/>
</dbReference>
<dbReference type="InterPro" id="IPR024937">
    <property type="entry name" value="Domain_X"/>
</dbReference>
<dbReference type="InterPro" id="IPR002866">
    <property type="entry name" value="Maturase_MatK"/>
</dbReference>
<dbReference type="InterPro" id="IPR024942">
    <property type="entry name" value="Maturase_MatK_N"/>
</dbReference>
<dbReference type="PANTHER" id="PTHR34811">
    <property type="entry name" value="MATURASE K"/>
    <property type="match status" value="1"/>
</dbReference>
<dbReference type="PANTHER" id="PTHR34811:SF1">
    <property type="entry name" value="MATURASE K"/>
    <property type="match status" value="1"/>
</dbReference>
<dbReference type="Pfam" id="PF01348">
    <property type="entry name" value="Intron_maturas2"/>
    <property type="match status" value="1"/>
</dbReference>
<dbReference type="Pfam" id="PF01824">
    <property type="entry name" value="MatK_N"/>
    <property type="match status" value="1"/>
</dbReference>
<accession>Q8WJ32</accession>
<comment type="function">
    <text evidence="1">Usually encoded in the trnK tRNA gene intron. Probably assists in splicing its own and other chloroplast group II introns.</text>
</comment>
<comment type="subcellular location">
    <subcellularLocation>
        <location>Plastid</location>
        <location>Chloroplast</location>
    </subcellularLocation>
</comment>
<comment type="similarity">
    <text evidence="1">Belongs to the intron maturase 2 family. MatK subfamily.</text>
</comment>
<organism>
    <name type="scientific">Backhousia myrtifolia</name>
    <name type="common">Grey myrtle</name>
    <dbReference type="NCBI Taxonomy" id="178105"/>
    <lineage>
        <taxon>Eukaryota</taxon>
        <taxon>Viridiplantae</taxon>
        <taxon>Streptophyta</taxon>
        <taxon>Embryophyta</taxon>
        <taxon>Tracheophyta</taxon>
        <taxon>Spermatophyta</taxon>
        <taxon>Magnoliopsida</taxon>
        <taxon>eudicotyledons</taxon>
        <taxon>Gunneridae</taxon>
        <taxon>Pentapetalae</taxon>
        <taxon>rosids</taxon>
        <taxon>malvids</taxon>
        <taxon>Myrtales</taxon>
        <taxon>Myrtaceae</taxon>
        <taxon>Myrtoideae</taxon>
        <taxon>Backhousieae</taxon>
        <taxon>Backhousia</taxon>
    </lineage>
</organism>
<protein>
    <recommendedName>
        <fullName evidence="1">Maturase K</fullName>
    </recommendedName>
    <alternativeName>
        <fullName evidence="1">Intron maturase</fullName>
    </alternativeName>
</protein>
<feature type="chain" id="PRO_0000143274" description="Maturase K">
    <location>
        <begin position="1"/>
        <end position="503"/>
    </location>
</feature>
<evidence type="ECO:0000255" key="1">
    <source>
        <dbReference type="HAMAP-Rule" id="MF_01390"/>
    </source>
</evidence>
<gene>
    <name evidence="1" type="primary">matK</name>
</gene>
<keyword id="KW-0150">Chloroplast</keyword>
<keyword id="KW-0507">mRNA processing</keyword>
<keyword id="KW-0934">Plastid</keyword>
<keyword id="KW-0694">RNA-binding</keyword>
<keyword id="KW-0819">tRNA processing</keyword>
<name>MATK_BACMR</name>
<geneLocation type="chloroplast"/>
<sequence length="503" mass="59695">MEEFQGYLELDRSRQHDFLYPLLFREYIYALAHDHGLNKSILSENVGYGNKSSSIIVKRLITRMYQQNPLIFSANDSIQNQFFGHNKNLYSQIISEGFAVIVEIRFSLLLVSFLERKEIAKSQNLQSIHSIFPFLEVKFSHLDYVSDVLIPYHIHLEILVQTLRYWVKDASSLHLLRFFLHEYWNTLITPKKYITLFSKGNPRFFLFLYNSHICEYESVFXFXRNKSSHLWSTSSGIFXXRIYFYVKIEHXVKVFFDNDFQCILWFFKDPFMHYVRYQGKSIXASKDTPLLMNKWKYYLVNLWQYHFYXXFQPGRININQLCKYSLDFLGYRSSLXLXSSVVRSQMLENLXIINNAMKKFXXXVPIIPLIGSLSKANFXNTLGHPISKPTRSDXSDSDIINRFLRICRNLSHYHSGSSKKKSLYRVKYILRLSCVKTLARKHKITIRTFLKKSGSEFLEEFLTEEEVVLSLIFPRTYSTSRRLYREQSWXLDITSINDLVNYE</sequence>